<accession>Q9PT84</accession>
<accession>F1NBY6</accession>
<dbReference type="EMBL" id="AADN03008798">
    <property type="status" value="NOT_ANNOTATED_CDS"/>
    <property type="molecule type" value="Genomic_DNA"/>
</dbReference>
<dbReference type="EMBL" id="AJ271210">
    <property type="protein sequence ID" value="CAB66135.1"/>
    <property type="molecule type" value="mRNA"/>
</dbReference>
<dbReference type="SMR" id="Q9PT84"/>
<dbReference type="FunCoup" id="Q9PT84">
    <property type="interactions" value="46"/>
</dbReference>
<dbReference type="STRING" id="9031.ENSGALP00000066372"/>
<dbReference type="GlyCosmos" id="Q9PT84">
    <property type="glycosylation" value="2 sites, No reported glycans"/>
</dbReference>
<dbReference type="GlyGen" id="Q9PT84">
    <property type="glycosylation" value="2 sites"/>
</dbReference>
<dbReference type="PaxDb" id="9031-ENSGALP00000030828"/>
<dbReference type="VEuPathDB" id="HostDB:geneid_414871"/>
<dbReference type="eggNOG" id="KOG0498">
    <property type="taxonomic scope" value="Eukaryota"/>
</dbReference>
<dbReference type="InParanoid" id="Q9PT84"/>
<dbReference type="OrthoDB" id="432483at2759"/>
<dbReference type="TreeFam" id="TF313130"/>
<dbReference type="Proteomes" id="UP000000539">
    <property type="component" value="Unassembled WGS sequence"/>
</dbReference>
<dbReference type="GO" id="GO:0034702">
    <property type="term" value="C:monoatomic ion channel complex"/>
    <property type="evidence" value="ECO:0007669"/>
    <property type="project" value="UniProtKB-KW"/>
</dbReference>
<dbReference type="GO" id="GO:0005886">
    <property type="term" value="C:plasma membrane"/>
    <property type="evidence" value="ECO:0000318"/>
    <property type="project" value="GO_Central"/>
</dbReference>
<dbReference type="GO" id="GO:0005242">
    <property type="term" value="F:inward rectifier potassium channel activity"/>
    <property type="evidence" value="ECO:0000318"/>
    <property type="project" value="GO_Central"/>
</dbReference>
<dbReference type="GO" id="GO:0086013">
    <property type="term" value="P:membrane repolarization during cardiac muscle cell action potential"/>
    <property type="evidence" value="ECO:0000318"/>
    <property type="project" value="GO_Central"/>
</dbReference>
<dbReference type="GO" id="GO:0071805">
    <property type="term" value="P:potassium ion transmembrane transport"/>
    <property type="evidence" value="ECO:0000318"/>
    <property type="project" value="GO_Central"/>
</dbReference>
<dbReference type="GO" id="GO:0086091">
    <property type="term" value="P:regulation of heart rate by cardiac conduction"/>
    <property type="evidence" value="ECO:0000318"/>
    <property type="project" value="GO_Central"/>
</dbReference>
<dbReference type="GO" id="GO:0060307">
    <property type="term" value="P:regulation of ventricular cardiac muscle cell membrane repolarization"/>
    <property type="evidence" value="ECO:0000318"/>
    <property type="project" value="GO_Central"/>
</dbReference>
<dbReference type="CDD" id="cd00038">
    <property type="entry name" value="CAP_ED"/>
    <property type="match status" value="1"/>
</dbReference>
<dbReference type="CDD" id="cd00130">
    <property type="entry name" value="PAS"/>
    <property type="match status" value="1"/>
</dbReference>
<dbReference type="FunFam" id="1.10.287.70:FF:000020">
    <property type="entry name" value="Potassium channel, voltage-gated eag-related subfamily H, member 7"/>
    <property type="match status" value="1"/>
</dbReference>
<dbReference type="FunFam" id="2.60.120.10:FF:000011">
    <property type="entry name" value="Potassium channel, voltage-gated eag-related subfamily H, member 7"/>
    <property type="match status" value="1"/>
</dbReference>
<dbReference type="FunFam" id="1.10.1200.260:FF:000001">
    <property type="entry name" value="Potassium voltage-gated channel subfamily H member 7"/>
    <property type="match status" value="1"/>
</dbReference>
<dbReference type="FunFam" id="3.30.450.20:FF:000001">
    <property type="entry name" value="Potassium voltage-gated channel subfamily H member 7"/>
    <property type="match status" value="1"/>
</dbReference>
<dbReference type="Gene3D" id="1.10.1200.260">
    <property type="match status" value="1"/>
</dbReference>
<dbReference type="Gene3D" id="1.10.287.70">
    <property type="match status" value="1"/>
</dbReference>
<dbReference type="Gene3D" id="2.60.120.10">
    <property type="entry name" value="Jelly Rolls"/>
    <property type="match status" value="1"/>
</dbReference>
<dbReference type="Gene3D" id="3.30.450.20">
    <property type="entry name" value="PAS domain"/>
    <property type="match status" value="1"/>
</dbReference>
<dbReference type="InterPro" id="IPR000595">
    <property type="entry name" value="cNMP-bd_dom"/>
</dbReference>
<dbReference type="InterPro" id="IPR018490">
    <property type="entry name" value="cNMP-bd_dom_sf"/>
</dbReference>
<dbReference type="InterPro" id="IPR005821">
    <property type="entry name" value="Ion_trans_dom"/>
</dbReference>
<dbReference type="InterPro" id="IPR003938">
    <property type="entry name" value="K_chnl_volt-dep_EAG/ELK/ERG"/>
</dbReference>
<dbReference type="InterPro" id="IPR003967">
    <property type="entry name" value="K_chnl_volt-dep_ERG"/>
</dbReference>
<dbReference type="InterPro" id="IPR050818">
    <property type="entry name" value="KCNH_animal-type"/>
</dbReference>
<dbReference type="InterPro" id="IPR000014">
    <property type="entry name" value="PAS"/>
</dbReference>
<dbReference type="InterPro" id="IPR035965">
    <property type="entry name" value="PAS-like_dom_sf"/>
</dbReference>
<dbReference type="InterPro" id="IPR014710">
    <property type="entry name" value="RmlC-like_jellyroll"/>
</dbReference>
<dbReference type="NCBIfam" id="TIGR00229">
    <property type="entry name" value="sensory_box"/>
    <property type="match status" value="1"/>
</dbReference>
<dbReference type="PANTHER" id="PTHR10217:SF468">
    <property type="entry name" value="POTASSIUM VOLTAGE-GATED CHANNEL SUBFAMILY H MEMBER 6"/>
    <property type="match status" value="1"/>
</dbReference>
<dbReference type="PANTHER" id="PTHR10217">
    <property type="entry name" value="VOLTAGE AND LIGAND GATED POTASSIUM CHANNEL"/>
    <property type="match status" value="1"/>
</dbReference>
<dbReference type="Pfam" id="PF00027">
    <property type="entry name" value="cNMP_binding"/>
    <property type="match status" value="1"/>
</dbReference>
<dbReference type="Pfam" id="PF00520">
    <property type="entry name" value="Ion_trans"/>
    <property type="match status" value="1"/>
</dbReference>
<dbReference type="Pfam" id="PF13426">
    <property type="entry name" value="PAS_9"/>
    <property type="match status" value="1"/>
</dbReference>
<dbReference type="PRINTS" id="PR01463">
    <property type="entry name" value="EAGCHANLFMLY"/>
</dbReference>
<dbReference type="PRINTS" id="PR01470">
    <property type="entry name" value="ERGCHANNEL"/>
</dbReference>
<dbReference type="SMART" id="SM00100">
    <property type="entry name" value="cNMP"/>
    <property type="match status" value="1"/>
</dbReference>
<dbReference type="SUPFAM" id="SSF51206">
    <property type="entry name" value="cAMP-binding domain-like"/>
    <property type="match status" value="1"/>
</dbReference>
<dbReference type="SUPFAM" id="SSF55785">
    <property type="entry name" value="PYP-like sensor domain (PAS domain)"/>
    <property type="match status" value="1"/>
</dbReference>
<dbReference type="SUPFAM" id="SSF81324">
    <property type="entry name" value="Voltage-gated potassium channels"/>
    <property type="match status" value="1"/>
</dbReference>
<dbReference type="PROSITE" id="PS50042">
    <property type="entry name" value="CNMP_BINDING_3"/>
    <property type="match status" value="1"/>
</dbReference>
<dbReference type="PROSITE" id="PS50112">
    <property type="entry name" value="PAS"/>
    <property type="match status" value="1"/>
</dbReference>
<feature type="chain" id="PRO_0000054004" description="Voltage-gated inwardly rectifying potassium channel KCNH6">
    <location>
        <begin position="1"/>
        <end position="1202"/>
    </location>
</feature>
<feature type="topological domain" description="Cytoplasmic" evidence="5">
    <location>
        <begin position="1"/>
        <end position="405"/>
    </location>
</feature>
<feature type="transmembrane region" description="Helical; Name=Segment S1" evidence="5">
    <location>
        <begin position="406"/>
        <end position="426"/>
    </location>
</feature>
<feature type="topological domain" description="Extracellular" evidence="5">
    <location>
        <begin position="427"/>
        <end position="443"/>
    </location>
</feature>
<feature type="transmembrane region" description="Helical; Name=Segment S2" evidence="5">
    <location>
        <begin position="444"/>
        <end position="464"/>
    </location>
</feature>
<feature type="topological domain" description="Cytoplasmic" evidence="5">
    <location>
        <begin position="465"/>
        <end position="485"/>
    </location>
</feature>
<feature type="transmembrane region" description="Helical; Name=Segment S3" evidence="5">
    <location>
        <begin position="486"/>
        <end position="506"/>
    </location>
</feature>
<feature type="topological domain" description="Extracellular" evidence="5">
    <location>
        <begin position="507"/>
        <end position="515"/>
    </location>
</feature>
<feature type="transmembrane region" description="Helical; Voltage-sensor; Name=Segment S4" evidence="5">
    <location>
        <begin position="516"/>
        <end position="536"/>
    </location>
</feature>
<feature type="topological domain" description="Cytoplasmic" evidence="5">
    <location>
        <begin position="537"/>
        <end position="543"/>
    </location>
</feature>
<feature type="transmembrane region" description="Helical; Name=Segment S5" evidence="5">
    <location>
        <begin position="544"/>
        <end position="564"/>
    </location>
</feature>
<feature type="topological domain" description="Extracellular" evidence="5">
    <location>
        <begin position="565"/>
        <end position="608"/>
    </location>
</feature>
<feature type="intramembrane region" description="Pore-forming; Name=Segment H5" evidence="5">
    <location>
        <begin position="609"/>
        <end position="629"/>
    </location>
</feature>
<feature type="topological domain" description="Extracellular" evidence="5">
    <location>
        <begin position="630"/>
        <end position="635"/>
    </location>
</feature>
<feature type="transmembrane region" description="Helical; Name=Segment S6" evidence="5">
    <location>
        <begin position="636"/>
        <end position="656"/>
    </location>
</feature>
<feature type="topological domain" description="Cytoplasmic" evidence="5">
    <location>
        <begin position="657"/>
        <end position="1202"/>
    </location>
</feature>
<feature type="domain" description="PAS" evidence="7">
    <location>
        <begin position="36"/>
        <end position="84"/>
    </location>
</feature>
<feature type="domain" description="PAC" evidence="8">
    <location>
        <begin position="87"/>
        <end position="139"/>
    </location>
</feature>
<feature type="region of interest" description="Disordered" evidence="10">
    <location>
        <begin position="203"/>
        <end position="243"/>
    </location>
</feature>
<feature type="region of interest" description="Disordered" evidence="10">
    <location>
        <begin position="285"/>
        <end position="315"/>
    </location>
</feature>
<feature type="region of interest" description="cNMP-binding domain" evidence="6">
    <location>
        <begin position="739"/>
        <end position="839"/>
    </location>
</feature>
<feature type="region of interest" description="Disordered" evidence="10">
    <location>
        <begin position="912"/>
        <end position="948"/>
    </location>
</feature>
<feature type="region of interest" description="Disordered" evidence="10">
    <location>
        <begin position="1092"/>
        <end position="1112"/>
    </location>
</feature>
<feature type="region of interest" description="Disordered" evidence="10">
    <location>
        <begin position="1140"/>
        <end position="1202"/>
    </location>
</feature>
<feature type="short sequence motif" description="Selectivity filter" evidence="3">
    <location>
        <begin position="621"/>
        <end position="626"/>
    </location>
</feature>
<feature type="compositionally biased region" description="Basic and acidic residues" evidence="10">
    <location>
        <begin position="213"/>
        <end position="222"/>
    </location>
</feature>
<feature type="compositionally biased region" description="Polar residues" evidence="10">
    <location>
        <begin position="928"/>
        <end position="937"/>
    </location>
</feature>
<feature type="compositionally biased region" description="Basic and acidic residues" evidence="10">
    <location>
        <begin position="1179"/>
        <end position="1195"/>
    </location>
</feature>
<feature type="glycosylation site" description="N-linked (GlcNAc...) asparagine" evidence="9">
    <location>
        <position position="437"/>
    </location>
</feature>
<feature type="glycosylation site" description="N-linked (GlcNAc...) asparagine" evidence="9">
    <location>
        <position position="594"/>
    </location>
</feature>
<feature type="sequence conflict" description="In Ref. 2; CAB66135." evidence="12" ref="2">
    <original>MGLSGK</original>
    <variation>QSWRAE</variation>
    <location>
        <begin position="294"/>
        <end position="299"/>
    </location>
</feature>
<gene>
    <name evidence="4" type="primary">KCNH6</name>
    <name evidence="11" type="synonym">ERG</name>
</gene>
<keyword id="KW-1003">Cell membrane</keyword>
<keyword id="KW-0325">Glycoprotein</keyword>
<keyword id="KW-0407">Ion channel</keyword>
<keyword id="KW-0406">Ion transport</keyword>
<keyword id="KW-0472">Membrane</keyword>
<keyword id="KW-0630">Potassium</keyword>
<keyword id="KW-0631">Potassium channel</keyword>
<keyword id="KW-0633">Potassium transport</keyword>
<keyword id="KW-1185">Reference proteome</keyword>
<keyword id="KW-0812">Transmembrane</keyword>
<keyword id="KW-1133">Transmembrane helix</keyword>
<keyword id="KW-0813">Transport</keyword>
<keyword id="KW-0851">Voltage-gated channel</keyword>
<sequence length="1202" mass="135501">MGSAALPHARQRWVSHALDSNRKFLIANAQMENCAIIYCNDGFCEMFGYSRVEVMQRPCTCDFLTGPDTTKSSIAQLTQALLGSEECKLEILYYRKDTSCFRCLVDVVPVKNEDGVVIMFILNFEDLAQLIAKSSGRSLHHRLSQSWRAGEGRRLKFSLPSLRRLKAQRNSLPTSEFDGVAIDYGKPGGDSLILRDLKTSPKENCVQSETESLLEKERRPSLEADPTLQHPIPKQEPPSLGPRGSYSAWGFIRSRPGGSFHSLRRVSSLDNFEAARSEFQRKFRERRANSEGGMGLSGKASHVKPNPPNSTSDSDLMKYRTISQIPQFTLNFVEFNLEKHRSGSTTEIEIIAPHKVTERTQNVTEKVTQVLSLGADVLPEYKLQAPRIHRWTILHYSPFKAVWDWLILLLVIYTAVFTPYSAAFLLNEEQGEEKHWNCSYSCDPLNIIDLIVDIMFIVDIVINFRTTYVNINDEVVSHPGKIAIHYFKGWFLIDMVAAIPFDLLIFRSGSDETTTLIGLLKTARLLRLVRVARKLDRYSEYGAAVLFLLMCTFALIAHWLACIWYAIGNVERPYMEHKIGWLDNLGDQIGKRYNDSDLSSGPSIKDKYVTALYFTFSSLTSVGFGNVSPNTNSEKIFSICVMLIGSLMYASIFGNVSAIIQRLYSGTARYHTQMLRVKEFIRFHQIPNPLRQRLEEYFQHAWSYTNGIDMNAVLKGFPDCLQADICLHLNRTLLQNCKAFRGASKGCLRALAMKFKTTHAPPGDTLVHYGDVLTTLYFISRGSIEILKEDIVVAILGKNDIFGEPISLYARPGKSNADVRALTYCDLHKIQREDLLEVLDMYPAFSDNFWSNLEITFNLRDADSVPRTPLSEEYDCTYRRVRRRKHSLCQPNKPDPDTGTSDAEQYHTYSELTNPQDPLSKDQWDDVGSSTTPCSQTSDDEAKPGSPTKALSLVTASASGTEVSKQAAESSQSYAGTHICTTPLDIPNMFTFWEDQRPNHHPEPLQHVSLVHSSRDIPLHSDYRPGQIESRLELLQAQLSRLESRMSSDINIILQLLQRQLSQVPPAYSPISPSSHNLAMYGIVPRSLEPLTPCAPLEDEQQTAPGQSPSYAEVEKFHLKSRHSLSSGMHLTVASDETMTVYSEQEHHSPPLLNPEPPHQRAPNTQGLLRGSRFPSLPEHLEASSEHQDIQRHLSDPVLPGS</sequence>
<reference key="1">
    <citation type="journal article" date="2004" name="Nature">
        <title>Sequence and comparative analysis of the chicken genome provide unique perspectives on vertebrate evolution.</title>
        <authorList>
            <person name="Hillier L.W."/>
            <person name="Miller W."/>
            <person name="Birney E."/>
            <person name="Warren W."/>
            <person name="Hardison R.C."/>
            <person name="Ponting C.P."/>
            <person name="Bork P."/>
            <person name="Burt D.W."/>
            <person name="Groenen M.A.M."/>
            <person name="Delany M.E."/>
            <person name="Dodgson J.B."/>
            <person name="Chinwalla A.T."/>
            <person name="Cliften P.F."/>
            <person name="Clifton S.W."/>
            <person name="Delehaunty K.D."/>
            <person name="Fronick C."/>
            <person name="Fulton R.S."/>
            <person name="Graves T.A."/>
            <person name="Kremitzki C."/>
            <person name="Layman D."/>
            <person name="Magrini V."/>
            <person name="McPherson J.D."/>
            <person name="Miner T.L."/>
            <person name="Minx P."/>
            <person name="Nash W.E."/>
            <person name="Nhan M.N."/>
            <person name="Nelson J.O."/>
            <person name="Oddy L.G."/>
            <person name="Pohl C.S."/>
            <person name="Randall-Maher J."/>
            <person name="Smith S.M."/>
            <person name="Wallis J.W."/>
            <person name="Yang S.-P."/>
            <person name="Romanov M.N."/>
            <person name="Rondelli C.M."/>
            <person name="Paton B."/>
            <person name="Smith J."/>
            <person name="Morrice D."/>
            <person name="Daniels L."/>
            <person name="Tempest H.G."/>
            <person name="Robertson L."/>
            <person name="Masabanda J.S."/>
            <person name="Griffin D.K."/>
            <person name="Vignal A."/>
            <person name="Fillon V."/>
            <person name="Jacobbson L."/>
            <person name="Kerje S."/>
            <person name="Andersson L."/>
            <person name="Crooijmans R.P."/>
            <person name="Aerts J."/>
            <person name="van der Poel J.J."/>
            <person name="Ellegren H."/>
            <person name="Caldwell R.B."/>
            <person name="Hubbard S.J."/>
            <person name="Grafham D.V."/>
            <person name="Kierzek A.M."/>
            <person name="McLaren S.R."/>
            <person name="Overton I.M."/>
            <person name="Arakawa H."/>
            <person name="Beattie K.J."/>
            <person name="Bezzubov Y."/>
            <person name="Boardman P.E."/>
            <person name="Bonfield J.K."/>
            <person name="Croning M.D.R."/>
            <person name="Davies R.M."/>
            <person name="Francis M.D."/>
            <person name="Humphray S.J."/>
            <person name="Scott C.E."/>
            <person name="Taylor R.G."/>
            <person name="Tickle C."/>
            <person name="Brown W.R.A."/>
            <person name="Rogers J."/>
            <person name="Buerstedde J.-M."/>
            <person name="Wilson S.A."/>
            <person name="Stubbs L."/>
            <person name="Ovcharenko I."/>
            <person name="Gordon L."/>
            <person name="Lucas S."/>
            <person name="Miller M.M."/>
            <person name="Inoko H."/>
            <person name="Shiina T."/>
            <person name="Kaufman J."/>
            <person name="Salomonsen J."/>
            <person name="Skjoedt K."/>
            <person name="Wong G.K.-S."/>
            <person name="Wang J."/>
            <person name="Liu B."/>
            <person name="Wang J."/>
            <person name="Yu J."/>
            <person name="Yang H."/>
            <person name="Nefedov M."/>
            <person name="Koriabine M."/>
            <person name="Dejong P.J."/>
            <person name="Goodstadt L."/>
            <person name="Webber C."/>
            <person name="Dickens N.J."/>
            <person name="Letunic I."/>
            <person name="Suyama M."/>
            <person name="Torrents D."/>
            <person name="von Mering C."/>
            <person name="Zdobnov E.M."/>
            <person name="Makova K."/>
            <person name="Nekrutenko A."/>
            <person name="Elnitski L."/>
            <person name="Eswara P."/>
            <person name="King D.C."/>
            <person name="Yang S.-P."/>
            <person name="Tyekucheva S."/>
            <person name="Radakrishnan A."/>
            <person name="Harris R.S."/>
            <person name="Chiaromonte F."/>
            <person name="Taylor J."/>
            <person name="He J."/>
            <person name="Rijnkels M."/>
            <person name="Griffiths-Jones S."/>
            <person name="Ureta-Vidal A."/>
            <person name="Hoffman M.M."/>
            <person name="Severin J."/>
            <person name="Searle S.M.J."/>
            <person name="Law A.S."/>
            <person name="Speed D."/>
            <person name="Waddington D."/>
            <person name="Cheng Z."/>
            <person name="Tuzun E."/>
            <person name="Eichler E."/>
            <person name="Bao Z."/>
            <person name="Flicek P."/>
            <person name="Shteynberg D.D."/>
            <person name="Brent M.R."/>
            <person name="Bye J.M."/>
            <person name="Huckle E.J."/>
            <person name="Chatterji S."/>
            <person name="Dewey C."/>
            <person name="Pachter L."/>
            <person name="Kouranov A."/>
            <person name="Mourelatos Z."/>
            <person name="Hatzigeorgiou A.G."/>
            <person name="Paterson A.H."/>
            <person name="Ivarie R."/>
            <person name="Brandstrom M."/>
            <person name="Axelsson E."/>
            <person name="Backstrom N."/>
            <person name="Berlin S."/>
            <person name="Webster M.T."/>
            <person name="Pourquie O."/>
            <person name="Reymond A."/>
            <person name="Ucla C."/>
            <person name="Antonarakis S.E."/>
            <person name="Long M."/>
            <person name="Emerson J.J."/>
            <person name="Betran E."/>
            <person name="Dupanloup I."/>
            <person name="Kaessmann H."/>
            <person name="Hinrichs A.S."/>
            <person name="Bejerano G."/>
            <person name="Furey T.S."/>
            <person name="Harte R.A."/>
            <person name="Raney B."/>
            <person name="Siepel A."/>
            <person name="Kent W.J."/>
            <person name="Haussler D."/>
            <person name="Eyras E."/>
            <person name="Castelo R."/>
            <person name="Abril J.F."/>
            <person name="Castellano S."/>
            <person name="Camara F."/>
            <person name="Parra G."/>
            <person name="Guigo R."/>
            <person name="Bourque G."/>
            <person name="Tesler G."/>
            <person name="Pevzner P.A."/>
            <person name="Smit A."/>
            <person name="Fulton L.A."/>
            <person name="Mardis E.R."/>
            <person name="Wilson R.K."/>
        </authorList>
    </citation>
    <scope>NUCLEOTIDE SEQUENCE [LARGE SCALE GENOMIC DNA]</scope>
    <source>
        <strain>Red jungle fowl</strain>
    </source>
</reference>
<reference key="2">
    <citation type="journal article" date="2000" name="Mech. Dev.">
        <title>erg gene(s) expression during development of the nervous and muscular system of quail embryos.</title>
        <authorList>
            <person name="Crociani O."/>
            <person name="Cherubini A."/>
            <person name="Piccini E."/>
            <person name="Polvani S."/>
            <person name="Costa L."/>
            <person name="Fontana L."/>
            <person name="Hofmann G."/>
            <person name="Rosati B."/>
            <person name="Wanke E."/>
            <person name="Olivotto M."/>
            <person name="Arcangeli A."/>
        </authorList>
    </citation>
    <scope>NUCLEOTIDE SEQUENCE [MRNA] OF 294-819</scope>
    <source>
        <tissue>Embryo</tissue>
    </source>
</reference>
<organism>
    <name type="scientific">Gallus gallus</name>
    <name type="common">Chicken</name>
    <dbReference type="NCBI Taxonomy" id="9031"/>
    <lineage>
        <taxon>Eukaryota</taxon>
        <taxon>Metazoa</taxon>
        <taxon>Chordata</taxon>
        <taxon>Craniata</taxon>
        <taxon>Vertebrata</taxon>
        <taxon>Euteleostomi</taxon>
        <taxon>Archelosauria</taxon>
        <taxon>Archosauria</taxon>
        <taxon>Dinosauria</taxon>
        <taxon>Saurischia</taxon>
        <taxon>Theropoda</taxon>
        <taxon>Coelurosauria</taxon>
        <taxon>Aves</taxon>
        <taxon>Neognathae</taxon>
        <taxon>Galloanserae</taxon>
        <taxon>Galliformes</taxon>
        <taxon>Phasianidae</taxon>
        <taxon>Phasianinae</taxon>
        <taxon>Gallus</taxon>
    </lineage>
</organism>
<proteinExistence type="evidence at transcript level"/>
<name>KCNH6_CHICK</name>
<comment type="function">
    <text evidence="1">Pore-forming (alpha) subunit of voltage-gated inwardly rectifying potassium channel. Characterized by unusual gating kinetics by producing relatively small outward currents during membrane depolarization and large inward currents during subsequent repolarization which reflect a rapid inactivation during depolarization and quick recovery from inactivation but slow deactivation (closing) during repolarization. Activates even more slowly than KCNH2.</text>
</comment>
<comment type="catalytic activity">
    <reaction evidence="1">
        <text>K(+)(in) = K(+)(out)</text>
        <dbReference type="Rhea" id="RHEA:29463"/>
        <dbReference type="ChEBI" id="CHEBI:29103"/>
    </reaction>
</comment>
<comment type="subunit">
    <text evidence="1">The potassium channel is probably composed of a homo- or heterotetrameric complex of pore-forming alpha subunits that can associate only within their subfamily.</text>
</comment>
<comment type="subcellular location">
    <subcellularLocation>
        <location evidence="2">Cell membrane</location>
        <topology evidence="2">Multi-pass membrane protein</topology>
    </subcellularLocation>
</comment>
<comment type="domain">
    <text evidence="2">The S4-S5 linker acts as a signal integrator where it both couples voltage-sensor domain (VSD) movement to pore opening and closure, as well as providing a binding site for other domains that regulate activation and/or deactivation of the channel.</text>
</comment>
<comment type="similarity">
    <text evidence="12">Belongs to the potassium channel family. H (Eag) (TC 1.A.1.20) subfamily. Kv11.2/KCNH6 sub-subfamily.</text>
</comment>
<protein>
    <recommendedName>
        <fullName evidence="4">Voltage-gated inwardly rectifying potassium channel KCNH6</fullName>
    </recommendedName>
    <alternativeName>
        <fullName evidence="11">Ether-a-go-go-related gene potassium channel</fullName>
        <shortName evidence="11">ERG</shortName>
        <shortName evidence="11">Eag-related protein</shortName>
        <shortName evidence="11">Ether-a-go-go-related protein</shortName>
    </alternativeName>
    <alternativeName>
        <fullName evidence="12">Potassium voltage-gated channel subfamily H member 6</fullName>
    </alternativeName>
    <alternativeName>
        <fullName evidence="4">Voltage-gated potassium channel subunit Kv11.2</fullName>
    </alternativeName>
</protein>
<evidence type="ECO:0000250" key="1">
    <source>
        <dbReference type="UniProtKB" id="O54853"/>
    </source>
</evidence>
<evidence type="ECO:0000250" key="2">
    <source>
        <dbReference type="UniProtKB" id="Q12809"/>
    </source>
</evidence>
<evidence type="ECO:0000250" key="3">
    <source>
        <dbReference type="UniProtKB" id="Q63472"/>
    </source>
</evidence>
<evidence type="ECO:0000250" key="4">
    <source>
        <dbReference type="UniProtKB" id="Q9H252"/>
    </source>
</evidence>
<evidence type="ECO:0000255" key="5"/>
<evidence type="ECO:0000255" key="6">
    <source>
        <dbReference type="PROSITE-ProRule" id="PRU00060"/>
    </source>
</evidence>
<evidence type="ECO:0000255" key="7">
    <source>
        <dbReference type="PROSITE-ProRule" id="PRU00140"/>
    </source>
</evidence>
<evidence type="ECO:0000255" key="8">
    <source>
        <dbReference type="PROSITE-ProRule" id="PRU00141"/>
    </source>
</evidence>
<evidence type="ECO:0000255" key="9">
    <source>
        <dbReference type="PROSITE-ProRule" id="PRU00498"/>
    </source>
</evidence>
<evidence type="ECO:0000256" key="10">
    <source>
        <dbReference type="SAM" id="MobiDB-lite"/>
    </source>
</evidence>
<evidence type="ECO:0000303" key="11">
    <source>
    </source>
</evidence>
<evidence type="ECO:0000305" key="12"/>